<organism>
    <name type="scientific">Burkholderia mallei (strain NCTC 10229)</name>
    <dbReference type="NCBI Taxonomy" id="412022"/>
    <lineage>
        <taxon>Bacteria</taxon>
        <taxon>Pseudomonadati</taxon>
        <taxon>Pseudomonadota</taxon>
        <taxon>Betaproteobacteria</taxon>
        <taxon>Burkholderiales</taxon>
        <taxon>Burkholderiaceae</taxon>
        <taxon>Burkholderia</taxon>
        <taxon>pseudomallei group</taxon>
    </lineage>
</organism>
<accession>A2S463</accession>
<gene>
    <name evidence="1" type="primary">pnp</name>
    <name type="ordered locus">BMA10229_A0742</name>
</gene>
<proteinExistence type="inferred from homology"/>
<name>PNP_BURM9</name>
<comment type="function">
    <text evidence="1">Involved in mRNA degradation. Catalyzes the phosphorolysis of single-stranded polyribonucleotides processively in the 3'- to 5'-direction.</text>
</comment>
<comment type="catalytic activity">
    <reaction evidence="1">
        <text>RNA(n+1) + phosphate = RNA(n) + a ribonucleoside 5'-diphosphate</text>
        <dbReference type="Rhea" id="RHEA:22096"/>
        <dbReference type="Rhea" id="RHEA-COMP:14527"/>
        <dbReference type="Rhea" id="RHEA-COMP:17342"/>
        <dbReference type="ChEBI" id="CHEBI:43474"/>
        <dbReference type="ChEBI" id="CHEBI:57930"/>
        <dbReference type="ChEBI" id="CHEBI:140395"/>
        <dbReference type="EC" id="2.7.7.8"/>
    </reaction>
</comment>
<comment type="cofactor">
    <cofactor evidence="1">
        <name>Mg(2+)</name>
        <dbReference type="ChEBI" id="CHEBI:18420"/>
    </cofactor>
</comment>
<comment type="subcellular location">
    <subcellularLocation>
        <location evidence="1">Cytoplasm</location>
    </subcellularLocation>
</comment>
<comment type="similarity">
    <text evidence="1">Belongs to the polyribonucleotide nucleotidyltransferase family.</text>
</comment>
<evidence type="ECO:0000255" key="1">
    <source>
        <dbReference type="HAMAP-Rule" id="MF_01595"/>
    </source>
</evidence>
<sequence length="713" mass="77007">MSLFNKIVKEFQWGQQKVRLETGEIARQASGAVIVDIEDTVVLATVVGAKSAKPGQDFFPLTVDYIEKTYSAGKIPGGFFRREGRPSEHETLTSRLIDRPLRPLFPEGFYNEVQVVIHVLSVNPEIPADIPALIGASAALAVSGLPFNGPVGAARVAYVNNEYVLNPTREQIKASRLDLVVAGTERAVLMVESEADQLPEDVMLGAVVFGHEQMQTAIDAIHELVREGGKPEWDWQPAPKDEALNARVTELAQPELLAAYQIRDKQARLTKLKEVYAATSAKLEEEAVAAGTVAADKATVGNILFDLEAKIVRGQILNGEPRIDGRDTRTVRPIEIRTGVLPRTHGSALFTRGETQALVVATLGTKGDEQIIDALEGEYRERFMLHYNMPPFATGETGRVGSPKRREIGHGRLAKRALVACLPSADEFGYSIRVVSEITESNGSSSMASVCGGCLALMDAGVPMKAHVAGIAMGLILEGNKFAVLTDILGDEDHLGDMDFKVAGTADGVTALQMDIKIQGITKEIMQVALAQAKEGRMHILGKMKDAVAGANTQLSEFAPRMITIKINPEKIRDVIGKGGSVIRALTEETGTTIDISDDGVVTIASTNSEGMAEAKKRIENITAEIEVGHVYEGTVLKLLDFGAIVNLLPGKDGLLHISEIVNERVKDINDYLKEGQQVKVKVIQTDEKGRVRLSAKALLNEAAAQADTPPQQ</sequence>
<keyword id="KW-0963">Cytoplasm</keyword>
<keyword id="KW-0460">Magnesium</keyword>
<keyword id="KW-0479">Metal-binding</keyword>
<keyword id="KW-0548">Nucleotidyltransferase</keyword>
<keyword id="KW-0694">RNA-binding</keyword>
<keyword id="KW-0808">Transferase</keyword>
<feature type="chain" id="PRO_0000329555" description="Polyribonucleotide nucleotidyltransferase">
    <location>
        <begin position="1"/>
        <end position="713"/>
    </location>
</feature>
<feature type="domain" description="KH" evidence="1">
    <location>
        <begin position="560"/>
        <end position="619"/>
    </location>
</feature>
<feature type="domain" description="S1 motif" evidence="1">
    <location>
        <begin position="629"/>
        <end position="697"/>
    </location>
</feature>
<feature type="binding site" evidence="1">
    <location>
        <position position="493"/>
    </location>
    <ligand>
        <name>Mg(2+)</name>
        <dbReference type="ChEBI" id="CHEBI:18420"/>
    </ligand>
</feature>
<feature type="binding site" evidence="1">
    <location>
        <position position="499"/>
    </location>
    <ligand>
        <name>Mg(2+)</name>
        <dbReference type="ChEBI" id="CHEBI:18420"/>
    </ligand>
</feature>
<dbReference type="EC" id="2.7.7.8" evidence="1"/>
<dbReference type="EMBL" id="CP000546">
    <property type="protein sequence ID" value="ABN02282.1"/>
    <property type="molecule type" value="Genomic_DNA"/>
</dbReference>
<dbReference type="RefSeq" id="WP_004186494.1">
    <property type="nucleotide sequence ID" value="NC_008836.1"/>
</dbReference>
<dbReference type="SMR" id="A2S463"/>
<dbReference type="GeneID" id="92979547"/>
<dbReference type="KEGG" id="bml:BMA10229_A0742"/>
<dbReference type="HOGENOM" id="CLU_004217_2_2_4"/>
<dbReference type="Proteomes" id="UP000002283">
    <property type="component" value="Chromosome I"/>
</dbReference>
<dbReference type="GO" id="GO:0005829">
    <property type="term" value="C:cytosol"/>
    <property type="evidence" value="ECO:0007669"/>
    <property type="project" value="TreeGrafter"/>
</dbReference>
<dbReference type="GO" id="GO:0000175">
    <property type="term" value="F:3'-5'-RNA exonuclease activity"/>
    <property type="evidence" value="ECO:0007669"/>
    <property type="project" value="TreeGrafter"/>
</dbReference>
<dbReference type="GO" id="GO:0000287">
    <property type="term" value="F:magnesium ion binding"/>
    <property type="evidence" value="ECO:0007669"/>
    <property type="project" value="UniProtKB-UniRule"/>
</dbReference>
<dbReference type="GO" id="GO:0004654">
    <property type="term" value="F:polyribonucleotide nucleotidyltransferase activity"/>
    <property type="evidence" value="ECO:0007669"/>
    <property type="project" value="UniProtKB-UniRule"/>
</dbReference>
<dbReference type="GO" id="GO:0003723">
    <property type="term" value="F:RNA binding"/>
    <property type="evidence" value="ECO:0007669"/>
    <property type="project" value="UniProtKB-UniRule"/>
</dbReference>
<dbReference type="GO" id="GO:0006402">
    <property type="term" value="P:mRNA catabolic process"/>
    <property type="evidence" value="ECO:0007669"/>
    <property type="project" value="UniProtKB-UniRule"/>
</dbReference>
<dbReference type="GO" id="GO:0006396">
    <property type="term" value="P:RNA processing"/>
    <property type="evidence" value="ECO:0007669"/>
    <property type="project" value="InterPro"/>
</dbReference>
<dbReference type="CDD" id="cd02393">
    <property type="entry name" value="KH-I_PNPase"/>
    <property type="match status" value="1"/>
</dbReference>
<dbReference type="CDD" id="cd11363">
    <property type="entry name" value="RNase_PH_PNPase_1"/>
    <property type="match status" value="1"/>
</dbReference>
<dbReference type="CDD" id="cd11364">
    <property type="entry name" value="RNase_PH_PNPase_2"/>
    <property type="match status" value="1"/>
</dbReference>
<dbReference type="CDD" id="cd04472">
    <property type="entry name" value="S1_PNPase"/>
    <property type="match status" value="1"/>
</dbReference>
<dbReference type="FunFam" id="3.30.1370.10:FF:000001">
    <property type="entry name" value="Polyribonucleotide nucleotidyltransferase"/>
    <property type="match status" value="1"/>
</dbReference>
<dbReference type="FunFam" id="3.30.230.70:FF:000001">
    <property type="entry name" value="Polyribonucleotide nucleotidyltransferase"/>
    <property type="match status" value="1"/>
</dbReference>
<dbReference type="FunFam" id="3.30.230.70:FF:000002">
    <property type="entry name" value="Polyribonucleotide nucleotidyltransferase"/>
    <property type="match status" value="1"/>
</dbReference>
<dbReference type="FunFam" id="2.40.50.140:FF:000189">
    <property type="entry name" value="Polyribonucleotide nucleotidyltransferase, putative"/>
    <property type="match status" value="1"/>
</dbReference>
<dbReference type="Gene3D" id="3.30.230.70">
    <property type="entry name" value="GHMP Kinase, N-terminal domain"/>
    <property type="match status" value="2"/>
</dbReference>
<dbReference type="Gene3D" id="3.30.1370.10">
    <property type="entry name" value="K Homology domain, type 1"/>
    <property type="match status" value="1"/>
</dbReference>
<dbReference type="Gene3D" id="2.40.50.140">
    <property type="entry name" value="Nucleic acid-binding proteins"/>
    <property type="match status" value="1"/>
</dbReference>
<dbReference type="HAMAP" id="MF_01595">
    <property type="entry name" value="PNPase"/>
    <property type="match status" value="1"/>
</dbReference>
<dbReference type="InterPro" id="IPR001247">
    <property type="entry name" value="ExoRNase_PH_dom1"/>
</dbReference>
<dbReference type="InterPro" id="IPR015847">
    <property type="entry name" value="ExoRNase_PH_dom2"/>
</dbReference>
<dbReference type="InterPro" id="IPR036345">
    <property type="entry name" value="ExoRNase_PH_dom2_sf"/>
</dbReference>
<dbReference type="InterPro" id="IPR004087">
    <property type="entry name" value="KH_dom"/>
</dbReference>
<dbReference type="InterPro" id="IPR004088">
    <property type="entry name" value="KH_dom_type_1"/>
</dbReference>
<dbReference type="InterPro" id="IPR036612">
    <property type="entry name" value="KH_dom_type_1_sf"/>
</dbReference>
<dbReference type="InterPro" id="IPR012340">
    <property type="entry name" value="NA-bd_OB-fold"/>
</dbReference>
<dbReference type="InterPro" id="IPR012162">
    <property type="entry name" value="PNPase"/>
</dbReference>
<dbReference type="InterPro" id="IPR027408">
    <property type="entry name" value="PNPase/RNase_PH_dom_sf"/>
</dbReference>
<dbReference type="InterPro" id="IPR015848">
    <property type="entry name" value="PNPase_PH_RNA-bd_bac/org-type"/>
</dbReference>
<dbReference type="InterPro" id="IPR036456">
    <property type="entry name" value="PNPase_PH_RNA-bd_sf"/>
</dbReference>
<dbReference type="InterPro" id="IPR020568">
    <property type="entry name" value="Ribosomal_Su5_D2-typ_SF"/>
</dbReference>
<dbReference type="InterPro" id="IPR003029">
    <property type="entry name" value="S1_domain"/>
</dbReference>
<dbReference type="NCBIfam" id="TIGR03591">
    <property type="entry name" value="polynuc_phos"/>
    <property type="match status" value="1"/>
</dbReference>
<dbReference type="NCBIfam" id="NF008805">
    <property type="entry name" value="PRK11824.1"/>
    <property type="match status" value="1"/>
</dbReference>
<dbReference type="PANTHER" id="PTHR11252">
    <property type="entry name" value="POLYRIBONUCLEOTIDE NUCLEOTIDYLTRANSFERASE"/>
    <property type="match status" value="1"/>
</dbReference>
<dbReference type="PANTHER" id="PTHR11252:SF0">
    <property type="entry name" value="POLYRIBONUCLEOTIDE NUCLEOTIDYLTRANSFERASE 1, MITOCHONDRIAL"/>
    <property type="match status" value="1"/>
</dbReference>
<dbReference type="Pfam" id="PF00013">
    <property type="entry name" value="KH_1"/>
    <property type="match status" value="1"/>
</dbReference>
<dbReference type="Pfam" id="PF03726">
    <property type="entry name" value="PNPase"/>
    <property type="match status" value="1"/>
</dbReference>
<dbReference type="Pfam" id="PF01138">
    <property type="entry name" value="RNase_PH"/>
    <property type="match status" value="2"/>
</dbReference>
<dbReference type="Pfam" id="PF03725">
    <property type="entry name" value="RNase_PH_C"/>
    <property type="match status" value="2"/>
</dbReference>
<dbReference type="Pfam" id="PF00575">
    <property type="entry name" value="S1"/>
    <property type="match status" value="1"/>
</dbReference>
<dbReference type="PIRSF" id="PIRSF005499">
    <property type="entry name" value="PNPase"/>
    <property type="match status" value="1"/>
</dbReference>
<dbReference type="SMART" id="SM00322">
    <property type="entry name" value="KH"/>
    <property type="match status" value="1"/>
</dbReference>
<dbReference type="SMART" id="SM00316">
    <property type="entry name" value="S1"/>
    <property type="match status" value="1"/>
</dbReference>
<dbReference type="SUPFAM" id="SSF54791">
    <property type="entry name" value="Eukaryotic type KH-domain (KH-domain type I)"/>
    <property type="match status" value="1"/>
</dbReference>
<dbReference type="SUPFAM" id="SSF50249">
    <property type="entry name" value="Nucleic acid-binding proteins"/>
    <property type="match status" value="1"/>
</dbReference>
<dbReference type="SUPFAM" id="SSF46915">
    <property type="entry name" value="Polynucleotide phosphorylase/guanosine pentaphosphate synthase (PNPase/GPSI), domain 3"/>
    <property type="match status" value="1"/>
</dbReference>
<dbReference type="SUPFAM" id="SSF55666">
    <property type="entry name" value="Ribonuclease PH domain 2-like"/>
    <property type="match status" value="2"/>
</dbReference>
<dbReference type="SUPFAM" id="SSF54211">
    <property type="entry name" value="Ribosomal protein S5 domain 2-like"/>
    <property type="match status" value="2"/>
</dbReference>
<dbReference type="PROSITE" id="PS50084">
    <property type="entry name" value="KH_TYPE_1"/>
    <property type="match status" value="1"/>
</dbReference>
<dbReference type="PROSITE" id="PS50126">
    <property type="entry name" value="S1"/>
    <property type="match status" value="1"/>
</dbReference>
<reference key="1">
    <citation type="journal article" date="2010" name="Genome Biol. Evol.">
        <title>Continuing evolution of Burkholderia mallei through genome reduction and large-scale rearrangements.</title>
        <authorList>
            <person name="Losada L."/>
            <person name="Ronning C.M."/>
            <person name="DeShazer D."/>
            <person name="Woods D."/>
            <person name="Fedorova N."/>
            <person name="Kim H.S."/>
            <person name="Shabalina S.A."/>
            <person name="Pearson T.R."/>
            <person name="Brinkac L."/>
            <person name="Tan P."/>
            <person name="Nandi T."/>
            <person name="Crabtree J."/>
            <person name="Badger J."/>
            <person name="Beckstrom-Sternberg S."/>
            <person name="Saqib M."/>
            <person name="Schutzer S.E."/>
            <person name="Keim P."/>
            <person name="Nierman W.C."/>
        </authorList>
    </citation>
    <scope>NUCLEOTIDE SEQUENCE [LARGE SCALE GENOMIC DNA]</scope>
    <source>
        <strain>NCTC 10229</strain>
    </source>
</reference>
<protein>
    <recommendedName>
        <fullName evidence="1">Polyribonucleotide nucleotidyltransferase</fullName>
        <ecNumber evidence="1">2.7.7.8</ecNumber>
    </recommendedName>
    <alternativeName>
        <fullName evidence="1">Polynucleotide phosphorylase</fullName>
        <shortName evidence="1">PNPase</shortName>
    </alternativeName>
</protein>